<accession>B1Z033</accession>
<gene>
    <name evidence="1" type="primary">betB</name>
    <name type="ordered locus">BamMC406_5036</name>
</gene>
<comment type="function">
    <text evidence="1">Involved in the biosynthesis of the osmoprotectant glycine betaine. Catalyzes the irreversible oxidation of betaine aldehyde to the corresponding acid.</text>
</comment>
<comment type="catalytic activity">
    <reaction evidence="1">
        <text>betaine aldehyde + NAD(+) + H2O = glycine betaine + NADH + 2 H(+)</text>
        <dbReference type="Rhea" id="RHEA:15305"/>
        <dbReference type="ChEBI" id="CHEBI:15377"/>
        <dbReference type="ChEBI" id="CHEBI:15378"/>
        <dbReference type="ChEBI" id="CHEBI:15710"/>
        <dbReference type="ChEBI" id="CHEBI:17750"/>
        <dbReference type="ChEBI" id="CHEBI:57540"/>
        <dbReference type="ChEBI" id="CHEBI:57945"/>
        <dbReference type="EC" id="1.2.1.8"/>
    </reaction>
    <physiologicalReaction direction="left-to-right" evidence="1">
        <dbReference type="Rhea" id="RHEA:15306"/>
    </physiologicalReaction>
</comment>
<comment type="cofactor">
    <cofactor evidence="1">
        <name>K(+)</name>
        <dbReference type="ChEBI" id="CHEBI:29103"/>
    </cofactor>
    <text evidence="1">Binds 2 potassium ions per subunit.</text>
</comment>
<comment type="pathway">
    <text evidence="1">Amine and polyamine biosynthesis; betaine biosynthesis via choline pathway; betaine from betaine aldehyde: step 1/1.</text>
</comment>
<comment type="subunit">
    <text evidence="1">Dimer of dimers.</text>
</comment>
<comment type="similarity">
    <text evidence="1">Belongs to the aldehyde dehydrogenase family.</text>
</comment>
<evidence type="ECO:0000255" key="1">
    <source>
        <dbReference type="HAMAP-Rule" id="MF_00804"/>
    </source>
</evidence>
<reference key="1">
    <citation type="submission" date="2008-04" db="EMBL/GenBank/DDBJ databases">
        <title>Complete sequence of chromosome 2 of Burkholderia ambifaria MC40-6.</title>
        <authorList>
            <person name="Copeland A."/>
            <person name="Lucas S."/>
            <person name="Lapidus A."/>
            <person name="Glavina del Rio T."/>
            <person name="Dalin E."/>
            <person name="Tice H."/>
            <person name="Pitluck S."/>
            <person name="Chain P."/>
            <person name="Malfatti S."/>
            <person name="Shin M."/>
            <person name="Vergez L."/>
            <person name="Lang D."/>
            <person name="Schmutz J."/>
            <person name="Larimer F."/>
            <person name="Land M."/>
            <person name="Hauser L."/>
            <person name="Kyrpides N."/>
            <person name="Lykidis A."/>
            <person name="Ramette A."/>
            <person name="Konstantinidis K."/>
            <person name="Tiedje J."/>
            <person name="Richardson P."/>
        </authorList>
    </citation>
    <scope>NUCLEOTIDE SEQUENCE [LARGE SCALE GENOMIC DNA]</scope>
    <source>
        <strain>MC40-6</strain>
    </source>
</reference>
<sequence length="489" mass="52356">MSVYGLQRLYIGGGYVDATSGKTFDTFDPATGELLAQVQQASAADVDRAVASAREGQREWAAMTAMQRSRILRRAVDLLRERNDELAAIETRDTGKPIGETLAVDIVTGADVIEYYAGLATAIEGLQVPLRAESFVYTRREPLGVCAGIGAWNYPIQIACWKTAPALAAGNAMVFKPSEVTPLTALKLAEIYTEAGVPAGVFNVVQGDGSVGALLTGHPDIAKVSFTGGVETGKKVMSLAGASSLKEVTMELGGKSPLIVFEDADLDRAADIAVTANFFSSGQVCTNGTRVFVHRSVKDAFTQRVLERVKRIRVGKPTDADTNFGPLVSAAQLDKVLGFIDSGKAEGAKLLAGGTRLTDGHFGSGQYVAPTVFGDCRDDMKIVREEIFGPVMSILDFESEDEVIARANDTHYGLAAGVVTENLSRAHRTIHRLEAGICWINTWGESPAEMPVGGYKQSGVGRENGITTLEHYTRIKSVQVELGRYNPVF</sequence>
<protein>
    <recommendedName>
        <fullName evidence="1">Betaine aldehyde dehydrogenase</fullName>
        <shortName evidence="1">BADH</shortName>
        <ecNumber evidence="1">1.2.1.8</ecNumber>
    </recommendedName>
</protein>
<name>BETB_BURA4</name>
<proteinExistence type="inferred from homology"/>
<dbReference type="EC" id="1.2.1.8" evidence="1"/>
<dbReference type="EMBL" id="CP001026">
    <property type="protein sequence ID" value="ACB67482.1"/>
    <property type="molecule type" value="Genomic_DNA"/>
</dbReference>
<dbReference type="RefSeq" id="WP_006752712.1">
    <property type="nucleotide sequence ID" value="NC_010552.1"/>
</dbReference>
<dbReference type="SMR" id="B1Z033"/>
<dbReference type="KEGG" id="bac:BamMC406_5036"/>
<dbReference type="HOGENOM" id="CLU_005391_1_0_4"/>
<dbReference type="OrthoDB" id="6187633at2"/>
<dbReference type="UniPathway" id="UPA00529">
    <property type="reaction ID" value="UER00386"/>
</dbReference>
<dbReference type="Proteomes" id="UP000001680">
    <property type="component" value="Chromosome 2"/>
</dbReference>
<dbReference type="GO" id="GO:0008802">
    <property type="term" value="F:betaine-aldehyde dehydrogenase (NAD+) activity"/>
    <property type="evidence" value="ECO:0007669"/>
    <property type="project" value="UniProtKB-UniRule"/>
</dbReference>
<dbReference type="GO" id="GO:0046872">
    <property type="term" value="F:metal ion binding"/>
    <property type="evidence" value="ECO:0007669"/>
    <property type="project" value="UniProtKB-KW"/>
</dbReference>
<dbReference type="GO" id="GO:0019285">
    <property type="term" value="P:glycine betaine biosynthetic process from choline"/>
    <property type="evidence" value="ECO:0007669"/>
    <property type="project" value="UniProtKB-UniRule"/>
</dbReference>
<dbReference type="CDD" id="cd07090">
    <property type="entry name" value="ALDH_F9_TMBADH"/>
    <property type="match status" value="1"/>
</dbReference>
<dbReference type="FunFam" id="3.40.309.10:FF:000014">
    <property type="entry name" value="NAD/NADP-dependent betaine aldehyde dehydrogenase"/>
    <property type="match status" value="1"/>
</dbReference>
<dbReference type="FunFam" id="3.40.605.10:FF:000007">
    <property type="entry name" value="NAD/NADP-dependent betaine aldehyde dehydrogenase"/>
    <property type="match status" value="1"/>
</dbReference>
<dbReference type="Gene3D" id="3.40.605.10">
    <property type="entry name" value="Aldehyde Dehydrogenase, Chain A, domain 1"/>
    <property type="match status" value="1"/>
</dbReference>
<dbReference type="Gene3D" id="3.40.309.10">
    <property type="entry name" value="Aldehyde Dehydrogenase, Chain A, domain 2"/>
    <property type="match status" value="1"/>
</dbReference>
<dbReference type="HAMAP" id="MF_00804">
    <property type="entry name" value="BADH"/>
    <property type="match status" value="1"/>
</dbReference>
<dbReference type="InterPro" id="IPR016161">
    <property type="entry name" value="Ald_DH/histidinol_DH"/>
</dbReference>
<dbReference type="InterPro" id="IPR016163">
    <property type="entry name" value="Ald_DH_C"/>
</dbReference>
<dbReference type="InterPro" id="IPR016160">
    <property type="entry name" value="Ald_DH_CS_CYS"/>
</dbReference>
<dbReference type="InterPro" id="IPR029510">
    <property type="entry name" value="Ald_DH_CS_GLU"/>
</dbReference>
<dbReference type="InterPro" id="IPR016162">
    <property type="entry name" value="Ald_DH_N"/>
</dbReference>
<dbReference type="InterPro" id="IPR015590">
    <property type="entry name" value="Aldehyde_DH_dom"/>
</dbReference>
<dbReference type="InterPro" id="IPR011264">
    <property type="entry name" value="BADH"/>
</dbReference>
<dbReference type="NCBIfam" id="TIGR01804">
    <property type="entry name" value="BADH"/>
    <property type="match status" value="1"/>
</dbReference>
<dbReference type="NCBIfam" id="NF009725">
    <property type="entry name" value="PRK13252.1"/>
    <property type="match status" value="1"/>
</dbReference>
<dbReference type="PANTHER" id="PTHR11699">
    <property type="entry name" value="ALDEHYDE DEHYDROGENASE-RELATED"/>
    <property type="match status" value="1"/>
</dbReference>
<dbReference type="Pfam" id="PF00171">
    <property type="entry name" value="Aldedh"/>
    <property type="match status" value="1"/>
</dbReference>
<dbReference type="SUPFAM" id="SSF53720">
    <property type="entry name" value="ALDH-like"/>
    <property type="match status" value="1"/>
</dbReference>
<dbReference type="PROSITE" id="PS00070">
    <property type="entry name" value="ALDEHYDE_DEHYDR_CYS"/>
    <property type="match status" value="1"/>
</dbReference>
<dbReference type="PROSITE" id="PS00687">
    <property type="entry name" value="ALDEHYDE_DEHYDR_GLU"/>
    <property type="match status" value="1"/>
</dbReference>
<keyword id="KW-0479">Metal-binding</keyword>
<keyword id="KW-0520">NAD</keyword>
<keyword id="KW-0521">NADP</keyword>
<keyword id="KW-0558">Oxidation</keyword>
<keyword id="KW-0560">Oxidoreductase</keyword>
<keyword id="KW-0630">Potassium</keyword>
<feature type="chain" id="PRO_1000133940" description="Betaine aldehyde dehydrogenase">
    <location>
        <begin position="1"/>
        <end position="489"/>
    </location>
</feature>
<feature type="active site" description="Charge relay system" evidence="1">
    <location>
        <position position="162"/>
    </location>
</feature>
<feature type="active site" description="Proton acceptor" evidence="1">
    <location>
        <position position="251"/>
    </location>
</feature>
<feature type="active site" description="Nucleophile" evidence="1">
    <location>
        <position position="285"/>
    </location>
</feature>
<feature type="active site" description="Charge relay system" evidence="1">
    <location>
        <position position="463"/>
    </location>
</feature>
<feature type="binding site" evidence="1">
    <location>
        <position position="26"/>
    </location>
    <ligand>
        <name>K(+)</name>
        <dbReference type="ChEBI" id="CHEBI:29103"/>
        <label>1</label>
    </ligand>
</feature>
<feature type="binding site" evidence="1">
    <location>
        <position position="93"/>
    </location>
    <ligand>
        <name>K(+)</name>
        <dbReference type="ChEBI" id="CHEBI:29103"/>
        <label>1</label>
    </ligand>
</feature>
<feature type="binding site" evidence="1">
    <location>
        <begin position="150"/>
        <end position="152"/>
    </location>
    <ligand>
        <name>NAD(+)</name>
        <dbReference type="ChEBI" id="CHEBI:57540"/>
    </ligand>
</feature>
<feature type="binding site" evidence="1">
    <location>
        <begin position="176"/>
        <end position="179"/>
    </location>
    <ligand>
        <name>NAD(+)</name>
        <dbReference type="ChEBI" id="CHEBI:57540"/>
    </ligand>
</feature>
<feature type="binding site" evidence="1">
    <location>
        <position position="180"/>
    </location>
    <ligand>
        <name>K(+)</name>
        <dbReference type="ChEBI" id="CHEBI:29103"/>
        <label>1</label>
    </ligand>
</feature>
<feature type="binding site" evidence="1">
    <location>
        <begin position="229"/>
        <end position="232"/>
    </location>
    <ligand>
        <name>NAD(+)</name>
        <dbReference type="ChEBI" id="CHEBI:57540"/>
    </ligand>
</feature>
<feature type="binding site" evidence="1">
    <location>
        <position position="245"/>
    </location>
    <ligand>
        <name>K(+)</name>
        <dbReference type="ChEBI" id="CHEBI:29103"/>
        <label>2</label>
    </ligand>
</feature>
<feature type="binding site" evidence="1">
    <location>
        <position position="253"/>
    </location>
    <ligand>
        <name>NAD(+)</name>
        <dbReference type="ChEBI" id="CHEBI:57540"/>
    </ligand>
</feature>
<feature type="binding site" description="covalent" evidence="1">
    <location>
        <position position="285"/>
    </location>
    <ligand>
        <name>NAD(+)</name>
        <dbReference type="ChEBI" id="CHEBI:57540"/>
    </ligand>
</feature>
<feature type="binding site" evidence="1">
    <location>
        <position position="386"/>
    </location>
    <ligand>
        <name>NAD(+)</name>
        <dbReference type="ChEBI" id="CHEBI:57540"/>
    </ligand>
</feature>
<feature type="binding site" evidence="1">
    <location>
        <position position="456"/>
    </location>
    <ligand>
        <name>K(+)</name>
        <dbReference type="ChEBI" id="CHEBI:29103"/>
        <label>2</label>
    </ligand>
</feature>
<feature type="binding site" evidence="1">
    <location>
        <position position="459"/>
    </location>
    <ligand>
        <name>K(+)</name>
        <dbReference type="ChEBI" id="CHEBI:29103"/>
        <label>2</label>
    </ligand>
</feature>
<feature type="site" description="Seems to be a necessary countercharge to the potassium cations" evidence="1">
    <location>
        <position position="247"/>
    </location>
</feature>
<feature type="modified residue" description="Cysteine sulfenic acid (-SOH)" evidence="1">
    <location>
        <position position="285"/>
    </location>
</feature>
<organism>
    <name type="scientific">Burkholderia ambifaria (strain MC40-6)</name>
    <dbReference type="NCBI Taxonomy" id="398577"/>
    <lineage>
        <taxon>Bacteria</taxon>
        <taxon>Pseudomonadati</taxon>
        <taxon>Pseudomonadota</taxon>
        <taxon>Betaproteobacteria</taxon>
        <taxon>Burkholderiales</taxon>
        <taxon>Burkholderiaceae</taxon>
        <taxon>Burkholderia</taxon>
        <taxon>Burkholderia cepacia complex</taxon>
    </lineage>
</organism>